<protein>
    <recommendedName>
        <fullName>BTB/POZ domain-containing protein At5g48510</fullName>
    </recommendedName>
</protein>
<accession>Q9LV63</accession>
<organism>
    <name type="scientific">Arabidopsis thaliana</name>
    <name type="common">Mouse-ear cress</name>
    <dbReference type="NCBI Taxonomy" id="3702"/>
    <lineage>
        <taxon>Eukaryota</taxon>
        <taxon>Viridiplantae</taxon>
        <taxon>Streptophyta</taxon>
        <taxon>Embryophyta</taxon>
        <taxon>Tracheophyta</taxon>
        <taxon>Spermatophyta</taxon>
        <taxon>Magnoliopsida</taxon>
        <taxon>eudicotyledons</taxon>
        <taxon>Gunneridae</taxon>
        <taxon>Pentapetalae</taxon>
        <taxon>rosids</taxon>
        <taxon>malvids</taxon>
        <taxon>Brassicales</taxon>
        <taxon>Brassicaceae</taxon>
        <taxon>Camelineae</taxon>
        <taxon>Arabidopsis</taxon>
    </lineage>
</organism>
<gene>
    <name type="ordered locus">At5g48510</name>
    <name type="ORF">MJE7.15</name>
</gene>
<evidence type="ECO:0000255" key="1">
    <source>
        <dbReference type="PROSITE-ProRule" id="PRU00037"/>
    </source>
</evidence>
<evidence type="ECO:0000269" key="2">
    <source>
    </source>
</evidence>
<evidence type="ECO:0000269" key="3">
    <source>
    </source>
</evidence>
<dbReference type="EMBL" id="AB020745">
    <property type="protein sequence ID" value="BAA96971.1"/>
    <property type="molecule type" value="Genomic_DNA"/>
</dbReference>
<dbReference type="EMBL" id="CP002688">
    <property type="protein sequence ID" value="AED95679.1"/>
    <property type="molecule type" value="Genomic_DNA"/>
</dbReference>
<dbReference type="RefSeq" id="NP_199662.1">
    <property type="nucleotide sequence ID" value="NM_124227.2"/>
</dbReference>
<dbReference type="SMR" id="Q9LV63"/>
<dbReference type="BioGRID" id="20153">
    <property type="interactions" value="6"/>
</dbReference>
<dbReference type="FunCoup" id="Q9LV63">
    <property type="interactions" value="111"/>
</dbReference>
<dbReference type="IntAct" id="Q9LV63">
    <property type="interactions" value="6"/>
</dbReference>
<dbReference type="STRING" id="3702.Q9LV63"/>
<dbReference type="PaxDb" id="3702-AT5G48510.1"/>
<dbReference type="EnsemblPlants" id="AT5G48510.1">
    <property type="protein sequence ID" value="AT5G48510.1"/>
    <property type="gene ID" value="AT5G48510"/>
</dbReference>
<dbReference type="GeneID" id="834907"/>
<dbReference type="Gramene" id="AT5G48510.1">
    <property type="protein sequence ID" value="AT5G48510.1"/>
    <property type="gene ID" value="AT5G48510"/>
</dbReference>
<dbReference type="KEGG" id="ath:AT5G48510"/>
<dbReference type="Araport" id="AT5G48510"/>
<dbReference type="TAIR" id="AT5G48510"/>
<dbReference type="eggNOG" id="KOG1987">
    <property type="taxonomic scope" value="Eukaryota"/>
</dbReference>
<dbReference type="HOGENOM" id="CLU_004253_9_1_1"/>
<dbReference type="InParanoid" id="Q9LV63"/>
<dbReference type="OMA" id="SCIRMNI"/>
<dbReference type="PhylomeDB" id="Q9LV63"/>
<dbReference type="UniPathway" id="UPA00143"/>
<dbReference type="PRO" id="PR:Q9LV63"/>
<dbReference type="Proteomes" id="UP000006548">
    <property type="component" value="Chromosome 5"/>
</dbReference>
<dbReference type="ExpressionAtlas" id="Q9LV63">
    <property type="expression patterns" value="baseline and differential"/>
</dbReference>
<dbReference type="GO" id="GO:0016567">
    <property type="term" value="P:protein ubiquitination"/>
    <property type="evidence" value="ECO:0007669"/>
    <property type="project" value="UniProtKB-UniPathway"/>
</dbReference>
<dbReference type="CDD" id="cd18186">
    <property type="entry name" value="BTB_POZ_ZBTB_KLHL-like"/>
    <property type="match status" value="1"/>
</dbReference>
<dbReference type="Gene3D" id="1.25.40.420">
    <property type="match status" value="1"/>
</dbReference>
<dbReference type="Gene3D" id="3.30.710.10">
    <property type="entry name" value="Potassium Channel Kv1.1, Chain A"/>
    <property type="match status" value="1"/>
</dbReference>
<dbReference type="InterPro" id="IPR044784">
    <property type="entry name" value="At1g01640-like"/>
</dbReference>
<dbReference type="InterPro" id="IPR000210">
    <property type="entry name" value="BTB/POZ_dom"/>
</dbReference>
<dbReference type="InterPro" id="IPR011333">
    <property type="entry name" value="SKP1/BTB/POZ_sf"/>
</dbReference>
<dbReference type="PANTHER" id="PTHR47274">
    <property type="entry name" value="BTB/POZ DOMAIN CONTAINING PROTEIN, EXPRESSED-RELATED"/>
    <property type="match status" value="1"/>
</dbReference>
<dbReference type="PANTHER" id="PTHR47274:SF15">
    <property type="entry name" value="GENOME ASSEMBLY, CHROMOSOME: A05"/>
    <property type="match status" value="1"/>
</dbReference>
<dbReference type="Pfam" id="PF00651">
    <property type="entry name" value="BTB"/>
    <property type="match status" value="1"/>
</dbReference>
<dbReference type="SMART" id="SM00225">
    <property type="entry name" value="BTB"/>
    <property type="match status" value="1"/>
</dbReference>
<dbReference type="SUPFAM" id="SSF54695">
    <property type="entry name" value="POZ domain"/>
    <property type="match status" value="1"/>
</dbReference>
<dbReference type="PROSITE" id="PS50097">
    <property type="entry name" value="BTB"/>
    <property type="match status" value="1"/>
</dbReference>
<proteinExistence type="evidence at protein level"/>
<name>Y5851_ARATH</name>
<comment type="function">
    <text>May act as a substrate-specific adapter of an E3 ubiquitin-protein ligase complex (CUL3-RBX1-BTB) which mediates the ubiquitination and subsequent proteasomal degradation of target proteins.</text>
</comment>
<comment type="pathway">
    <text>Protein modification; protein ubiquitination.</text>
</comment>
<comment type="subunit">
    <text evidence="3">Interacts with CUL3A.</text>
</comment>
<comment type="domain">
    <text evidence="2">The BTB/POZ-like domain may mediate the interaction with some component of ubiquitin ligase complexes.</text>
</comment>
<keyword id="KW-1185">Reference proteome</keyword>
<keyword id="KW-0833">Ubl conjugation pathway</keyword>
<reference key="1">
    <citation type="journal article" date="2000" name="DNA Res.">
        <title>Structural analysis of Arabidopsis thaliana chromosome 5. X. Sequence features of the regions of 3,076,755 bp covered by sixty P1 and TAC clones.</title>
        <authorList>
            <person name="Sato S."/>
            <person name="Nakamura Y."/>
            <person name="Kaneko T."/>
            <person name="Katoh T."/>
            <person name="Asamizu E."/>
            <person name="Kotani H."/>
            <person name="Tabata S."/>
        </authorList>
    </citation>
    <scope>NUCLEOTIDE SEQUENCE [LARGE SCALE GENOMIC DNA]</scope>
    <source>
        <strain>cv. Columbia</strain>
    </source>
</reference>
<reference key="2">
    <citation type="journal article" date="2017" name="Plant J.">
        <title>Araport11: a complete reannotation of the Arabidopsis thaliana reference genome.</title>
        <authorList>
            <person name="Cheng C.Y."/>
            <person name="Krishnakumar V."/>
            <person name="Chan A.P."/>
            <person name="Thibaud-Nissen F."/>
            <person name="Schobel S."/>
            <person name="Town C.D."/>
        </authorList>
    </citation>
    <scope>GENOME REANNOTATION</scope>
    <source>
        <strain>cv. Columbia</strain>
    </source>
</reference>
<reference key="3">
    <citation type="journal article" date="2005" name="J. Biol. Chem.">
        <title>Cullins 3a and 3b assemble with members of the broad complex/tramtrack/bric-a-brac (BTB) protein family to form essential ubiquitin-protein ligases (E3s) in Arabidopsis.</title>
        <authorList>
            <person name="Gingerich D.J."/>
            <person name="Gagne J.M."/>
            <person name="Salter D.W."/>
            <person name="Hellmann H."/>
            <person name="Estelle M."/>
            <person name="Ma L."/>
            <person name="Vierstra R.D."/>
        </authorList>
    </citation>
    <scope>DOMAIN BTB</scope>
</reference>
<reference key="4">
    <citation type="journal article" date="2005" name="Plant Cell">
        <title>Arabidopsis has two redundant Cullin3 proteins that are essential for embryo development and that interact with RBX1 and BTB proteins to form multisubunit E3 ubiquitin ligase complexes in vivo.</title>
        <authorList>
            <person name="Figueroa P."/>
            <person name="Gusmaroli G."/>
            <person name="Serino G."/>
            <person name="Habashi J."/>
            <person name="Ma L."/>
            <person name="Shen Y."/>
            <person name="Feng S."/>
            <person name="Bostick M."/>
            <person name="Callis J."/>
            <person name="Hellmann H."/>
            <person name="Deng X.W."/>
        </authorList>
    </citation>
    <scope>INTERACTION WITH CUL3A</scope>
</reference>
<feature type="chain" id="PRO_0000406003" description="BTB/POZ domain-containing protein At5g48510">
    <location>
        <begin position="1"/>
        <end position="224"/>
    </location>
</feature>
<feature type="domain" description="BTB" evidence="1">
    <location>
        <begin position="24"/>
        <end position="98"/>
    </location>
</feature>
<sequence length="224" mass="24997">MATPTNKEHFSGGLAKVLAEKWQVDVMLKAKNSDEGSAISAHKLILASRSEVFKNMFELDEFKTSTKHVETITLSEMKHEELEAFVEFICSDGSMLSANVKQHARSLYLAADKYEILHLRDLCRTELISSLSLLNSLDLLVLAQIPFDKVLNDESFSYIKNNISTIASSDEFKLFVAGNPNLAVEIMKVSLITLTLRCSSCGSNHSLQGMYCCNCCRYGTLRLI</sequence>